<organism>
    <name type="scientific">Corynebacterium jeikeium (strain K411)</name>
    <dbReference type="NCBI Taxonomy" id="306537"/>
    <lineage>
        <taxon>Bacteria</taxon>
        <taxon>Bacillati</taxon>
        <taxon>Actinomycetota</taxon>
        <taxon>Actinomycetes</taxon>
        <taxon>Mycobacteriales</taxon>
        <taxon>Corynebacteriaceae</taxon>
        <taxon>Corynebacterium</taxon>
    </lineage>
</organism>
<accession>Q4JTC3</accession>
<sequence length="182" mass="19532">MPTPKKGARLGGSASHQKKILSNLAAQLFEHGAIKTTDAKAKLLRPYVEKIITKAKRGTLADRRNVLKLIPNKEVVAYLFNELAPKFEGRPGGYTRIIKLENRKGDNAPISQISLVTEQLASTEAERANRVAASKAKKAEAEAAEAKAEEAEEAPEVEADTATDKAAEAEAAEAADEAAEDK</sequence>
<comment type="subunit">
    <text evidence="1">Part of the 50S ribosomal subunit. Contacts protein L32.</text>
</comment>
<comment type="similarity">
    <text evidence="1">Belongs to the bacterial ribosomal protein bL17 family.</text>
</comment>
<protein>
    <recommendedName>
        <fullName evidence="1">Large ribosomal subunit protein bL17</fullName>
    </recommendedName>
    <alternativeName>
        <fullName evidence="3">50S ribosomal protein L17</fullName>
    </alternativeName>
</protein>
<feature type="chain" id="PRO_1000055812" description="Large ribosomal subunit protein bL17">
    <location>
        <begin position="1"/>
        <end position="182"/>
    </location>
</feature>
<feature type="region of interest" description="Disordered" evidence="2">
    <location>
        <begin position="126"/>
        <end position="182"/>
    </location>
</feature>
<feature type="compositionally biased region" description="Basic and acidic residues" evidence="2">
    <location>
        <begin position="137"/>
        <end position="149"/>
    </location>
</feature>
<feature type="compositionally biased region" description="Acidic residues" evidence="2">
    <location>
        <begin position="150"/>
        <end position="161"/>
    </location>
</feature>
<feature type="compositionally biased region" description="Acidic residues" evidence="2">
    <location>
        <begin position="170"/>
        <end position="182"/>
    </location>
</feature>
<name>RL17_CORJK</name>
<keyword id="KW-1185">Reference proteome</keyword>
<keyword id="KW-0687">Ribonucleoprotein</keyword>
<keyword id="KW-0689">Ribosomal protein</keyword>
<evidence type="ECO:0000255" key="1">
    <source>
        <dbReference type="HAMAP-Rule" id="MF_01368"/>
    </source>
</evidence>
<evidence type="ECO:0000256" key="2">
    <source>
        <dbReference type="SAM" id="MobiDB-lite"/>
    </source>
</evidence>
<evidence type="ECO:0000305" key="3"/>
<dbReference type="EMBL" id="CR931997">
    <property type="protein sequence ID" value="CAI37934.1"/>
    <property type="molecule type" value="Genomic_DNA"/>
</dbReference>
<dbReference type="RefSeq" id="WP_011274114.1">
    <property type="nucleotide sequence ID" value="NC_007164.1"/>
</dbReference>
<dbReference type="SMR" id="Q4JTC3"/>
<dbReference type="STRING" id="306537.jk1757"/>
<dbReference type="KEGG" id="cjk:jk1757"/>
<dbReference type="PATRIC" id="fig|306537.10.peg.1780"/>
<dbReference type="eggNOG" id="COG0203">
    <property type="taxonomic scope" value="Bacteria"/>
</dbReference>
<dbReference type="HOGENOM" id="CLU_074407_0_0_11"/>
<dbReference type="OrthoDB" id="9809073at2"/>
<dbReference type="Proteomes" id="UP000000545">
    <property type="component" value="Chromosome"/>
</dbReference>
<dbReference type="GO" id="GO:0022625">
    <property type="term" value="C:cytosolic large ribosomal subunit"/>
    <property type="evidence" value="ECO:0007669"/>
    <property type="project" value="TreeGrafter"/>
</dbReference>
<dbReference type="GO" id="GO:0003735">
    <property type="term" value="F:structural constituent of ribosome"/>
    <property type="evidence" value="ECO:0007669"/>
    <property type="project" value="InterPro"/>
</dbReference>
<dbReference type="GO" id="GO:0006412">
    <property type="term" value="P:translation"/>
    <property type="evidence" value="ECO:0007669"/>
    <property type="project" value="UniProtKB-UniRule"/>
</dbReference>
<dbReference type="FunFam" id="3.90.1030.10:FF:000001">
    <property type="entry name" value="50S ribosomal protein L17"/>
    <property type="match status" value="1"/>
</dbReference>
<dbReference type="Gene3D" id="3.90.1030.10">
    <property type="entry name" value="Ribosomal protein L17"/>
    <property type="match status" value="1"/>
</dbReference>
<dbReference type="HAMAP" id="MF_01368">
    <property type="entry name" value="Ribosomal_bL17"/>
    <property type="match status" value="1"/>
</dbReference>
<dbReference type="InterPro" id="IPR000456">
    <property type="entry name" value="Ribosomal_bL17"/>
</dbReference>
<dbReference type="InterPro" id="IPR047859">
    <property type="entry name" value="Ribosomal_bL17_CS"/>
</dbReference>
<dbReference type="InterPro" id="IPR036373">
    <property type="entry name" value="Ribosomal_bL17_sf"/>
</dbReference>
<dbReference type="NCBIfam" id="TIGR00059">
    <property type="entry name" value="L17"/>
    <property type="match status" value="1"/>
</dbReference>
<dbReference type="PANTHER" id="PTHR14413:SF16">
    <property type="entry name" value="LARGE RIBOSOMAL SUBUNIT PROTEIN BL17M"/>
    <property type="match status" value="1"/>
</dbReference>
<dbReference type="PANTHER" id="PTHR14413">
    <property type="entry name" value="RIBOSOMAL PROTEIN L17"/>
    <property type="match status" value="1"/>
</dbReference>
<dbReference type="Pfam" id="PF01196">
    <property type="entry name" value="Ribosomal_L17"/>
    <property type="match status" value="1"/>
</dbReference>
<dbReference type="SUPFAM" id="SSF64263">
    <property type="entry name" value="Prokaryotic ribosomal protein L17"/>
    <property type="match status" value="1"/>
</dbReference>
<dbReference type="PROSITE" id="PS01167">
    <property type="entry name" value="RIBOSOMAL_L17"/>
    <property type="match status" value="1"/>
</dbReference>
<reference key="1">
    <citation type="journal article" date="2005" name="J. Bacteriol.">
        <title>Complete genome sequence and analysis of the multiresistant nosocomial pathogen Corynebacterium jeikeium K411, a lipid-requiring bacterium of the human skin flora.</title>
        <authorList>
            <person name="Tauch A."/>
            <person name="Kaiser O."/>
            <person name="Hain T."/>
            <person name="Goesmann A."/>
            <person name="Weisshaar B."/>
            <person name="Albersmeier A."/>
            <person name="Bekel T."/>
            <person name="Bischoff N."/>
            <person name="Brune I."/>
            <person name="Chakraborty T."/>
            <person name="Kalinowski J."/>
            <person name="Meyer F."/>
            <person name="Rupp O."/>
            <person name="Schneiker S."/>
            <person name="Viehoever P."/>
            <person name="Puehler A."/>
        </authorList>
    </citation>
    <scope>NUCLEOTIDE SEQUENCE [LARGE SCALE GENOMIC DNA]</scope>
    <source>
        <strain>K411</strain>
    </source>
</reference>
<proteinExistence type="inferred from homology"/>
<gene>
    <name evidence="1" type="primary">rplQ</name>
    <name type="ordered locus">jk1757</name>
</gene>